<gene>
    <name type="primary">MYADM</name>
</gene>
<organism>
    <name type="scientific">Pongo abelii</name>
    <name type="common">Sumatran orangutan</name>
    <name type="synonym">Pongo pygmaeus abelii</name>
    <dbReference type="NCBI Taxonomy" id="9601"/>
    <lineage>
        <taxon>Eukaryota</taxon>
        <taxon>Metazoa</taxon>
        <taxon>Chordata</taxon>
        <taxon>Craniata</taxon>
        <taxon>Vertebrata</taxon>
        <taxon>Euteleostomi</taxon>
        <taxon>Mammalia</taxon>
        <taxon>Eutheria</taxon>
        <taxon>Euarchontoglires</taxon>
        <taxon>Primates</taxon>
        <taxon>Haplorrhini</taxon>
        <taxon>Catarrhini</taxon>
        <taxon>Hominidae</taxon>
        <taxon>Pongo</taxon>
    </lineage>
</organism>
<dbReference type="EMBL" id="CR860518">
    <property type="protein sequence ID" value="CAH92645.1"/>
    <property type="molecule type" value="mRNA"/>
</dbReference>
<dbReference type="RefSeq" id="NP_001126548.1">
    <property type="nucleotide sequence ID" value="NM_001133076.1"/>
</dbReference>
<dbReference type="SMR" id="Q5R6H1"/>
<dbReference type="FunCoup" id="Q5R6H1">
    <property type="interactions" value="47"/>
</dbReference>
<dbReference type="STRING" id="9601.ENSPPYP00000011608"/>
<dbReference type="GeneID" id="100173538"/>
<dbReference type="KEGG" id="pon:100173538"/>
<dbReference type="CTD" id="91663"/>
<dbReference type="eggNOG" id="KOG4788">
    <property type="taxonomic scope" value="Eukaryota"/>
</dbReference>
<dbReference type="InParanoid" id="Q5R6H1"/>
<dbReference type="OrthoDB" id="8737882at2759"/>
<dbReference type="Proteomes" id="UP000001595">
    <property type="component" value="Unplaced"/>
</dbReference>
<dbReference type="GO" id="GO:0005911">
    <property type="term" value="C:cell-cell junction"/>
    <property type="evidence" value="ECO:0007669"/>
    <property type="project" value="TreeGrafter"/>
</dbReference>
<dbReference type="GO" id="GO:0005886">
    <property type="term" value="C:plasma membrane"/>
    <property type="evidence" value="ECO:0007669"/>
    <property type="project" value="TreeGrafter"/>
</dbReference>
<dbReference type="GO" id="GO:0034115">
    <property type="term" value="P:negative regulation of heterotypic cell-cell adhesion"/>
    <property type="evidence" value="ECO:0007669"/>
    <property type="project" value="TreeGrafter"/>
</dbReference>
<dbReference type="InterPro" id="IPR008253">
    <property type="entry name" value="Marvel"/>
</dbReference>
<dbReference type="InterPro" id="IPR047123">
    <property type="entry name" value="MYADM-like"/>
</dbReference>
<dbReference type="PANTHER" id="PTHR17068:SF3">
    <property type="entry name" value="MYELOID-ASSOCIATED DIFFERENTIATION MARKER"/>
    <property type="match status" value="1"/>
</dbReference>
<dbReference type="PANTHER" id="PTHR17068">
    <property type="entry name" value="MYELOID-ASSOCIATED DIFFERENTIATION MARKER MYADM FAMILY MEMBER"/>
    <property type="match status" value="1"/>
</dbReference>
<dbReference type="Pfam" id="PF01284">
    <property type="entry name" value="MARVEL"/>
    <property type="match status" value="2"/>
</dbReference>
<dbReference type="PROSITE" id="PS51225">
    <property type="entry name" value="MARVEL"/>
    <property type="match status" value="2"/>
</dbReference>
<accession>Q5R6H1</accession>
<sequence length="322" mass="35308">MPVTVTRTTITTTTTSSSGQGSPTIVGSPRALTQPLGLLRLLQLVSTCVAFSLVASVGAWTGPMGNWSMFTWCFCFSVTLIILIVELCGLQARFPLSWRNFPITFACYAALFCLSASIIYPTTYVQFLSHGRSRDHAIAATFFSCIACVAYATEVAWTRARPGEITGYMATVPGLLKVLETFVACIIFAFISDTYLYQHQPALEWCVAVYAICFILAAIAILLNLGECTNVLPIPFPSFLSGLALLSVLLYATALVLWPLYQFDEKYGGQPRRSRDVSCSRSHAYYVCGWDRRLAVAILTAINLLAYVADLVHSAHLVFVKV</sequence>
<evidence type="ECO:0000250" key="1">
    <source>
        <dbReference type="UniProtKB" id="Q96S97"/>
    </source>
</evidence>
<evidence type="ECO:0000255" key="2"/>
<evidence type="ECO:0000255" key="3">
    <source>
        <dbReference type="PROSITE-ProRule" id="PRU00581"/>
    </source>
</evidence>
<evidence type="ECO:0000256" key="4">
    <source>
        <dbReference type="SAM" id="MobiDB-lite"/>
    </source>
</evidence>
<evidence type="ECO:0000305" key="5"/>
<protein>
    <recommendedName>
        <fullName>Myeloid-associated differentiation marker</fullName>
    </recommendedName>
</protein>
<reference key="1">
    <citation type="submission" date="2004-11" db="EMBL/GenBank/DDBJ databases">
        <authorList>
            <consortium name="The German cDNA consortium"/>
        </authorList>
    </citation>
    <scope>NUCLEOTIDE SEQUENCE [LARGE SCALE MRNA]</scope>
    <source>
        <tissue>Heart</tissue>
    </source>
</reference>
<feature type="chain" id="PRO_0000232595" description="Myeloid-associated differentiation marker">
    <location>
        <begin position="1"/>
        <end position="322"/>
    </location>
</feature>
<feature type="transmembrane region" description="Helical" evidence="2">
    <location>
        <begin position="41"/>
        <end position="61"/>
    </location>
</feature>
<feature type="transmembrane region" description="Helical" evidence="2">
    <location>
        <begin position="70"/>
        <end position="90"/>
    </location>
</feature>
<feature type="transmembrane region" description="Helical" evidence="2">
    <location>
        <begin position="101"/>
        <end position="121"/>
    </location>
</feature>
<feature type="transmembrane region" description="Helical" evidence="2">
    <location>
        <begin position="137"/>
        <end position="157"/>
    </location>
</feature>
<feature type="transmembrane region" description="Helical" evidence="2">
    <location>
        <begin position="171"/>
        <end position="191"/>
    </location>
</feature>
<feature type="transmembrane region" description="Helical" evidence="2">
    <location>
        <begin position="203"/>
        <end position="223"/>
    </location>
</feature>
<feature type="transmembrane region" description="Helical" evidence="2">
    <location>
        <begin position="239"/>
        <end position="259"/>
    </location>
</feature>
<feature type="transmembrane region" description="Helical" evidence="2">
    <location>
        <begin position="294"/>
        <end position="314"/>
    </location>
</feature>
<feature type="domain" description="MARVEL 1" evidence="3">
    <location>
        <begin position="31"/>
        <end position="163"/>
    </location>
</feature>
<feature type="domain" description="MARVEL 2" evidence="3">
    <location>
        <begin position="168"/>
        <end position="319"/>
    </location>
</feature>
<feature type="region of interest" description="Disordered" evidence="4">
    <location>
        <begin position="1"/>
        <end position="25"/>
    </location>
</feature>
<feature type="modified residue" description="Phosphoserine" evidence="1">
    <location>
        <position position="22"/>
    </location>
</feature>
<proteinExistence type="evidence at transcript level"/>
<name>MYADM_PONAB</name>
<keyword id="KW-0472">Membrane</keyword>
<keyword id="KW-0597">Phosphoprotein</keyword>
<keyword id="KW-1185">Reference proteome</keyword>
<keyword id="KW-0677">Repeat</keyword>
<keyword id="KW-0812">Transmembrane</keyword>
<keyword id="KW-1133">Transmembrane helix</keyword>
<comment type="subcellular location">
    <subcellularLocation>
        <location evidence="5">Membrane</location>
        <topology evidence="5">Multi-pass membrane protein</topology>
    </subcellularLocation>
</comment>
<comment type="similarity">
    <text evidence="5">Belongs to the MAL family.</text>
</comment>